<evidence type="ECO:0000255" key="1"/>
<evidence type="ECO:0000305" key="2"/>
<accession>Q58007</accession>
<gene>
    <name type="ordered locus">MJ0587</name>
</gene>
<reference key="1">
    <citation type="journal article" date="1996" name="Science">
        <title>Complete genome sequence of the methanogenic archaeon, Methanococcus jannaschii.</title>
        <authorList>
            <person name="Bult C.J."/>
            <person name="White O."/>
            <person name="Olsen G.J."/>
            <person name="Zhou L."/>
            <person name="Fleischmann R.D."/>
            <person name="Sutton G.G."/>
            <person name="Blake J.A."/>
            <person name="FitzGerald L.M."/>
            <person name="Clayton R.A."/>
            <person name="Gocayne J.D."/>
            <person name="Kerlavage A.R."/>
            <person name="Dougherty B.A."/>
            <person name="Tomb J.-F."/>
            <person name="Adams M.D."/>
            <person name="Reich C.I."/>
            <person name="Overbeek R."/>
            <person name="Kirkness E.F."/>
            <person name="Weinstock K.G."/>
            <person name="Merrick J.M."/>
            <person name="Glodek A."/>
            <person name="Scott J.L."/>
            <person name="Geoghagen N.S.M."/>
            <person name="Weidman J.F."/>
            <person name="Fuhrmann J.L."/>
            <person name="Nguyen D."/>
            <person name="Utterback T.R."/>
            <person name="Kelley J.M."/>
            <person name="Peterson J.D."/>
            <person name="Sadow P.W."/>
            <person name="Hanna M.C."/>
            <person name="Cotton M.D."/>
            <person name="Roberts K.M."/>
            <person name="Hurst M.A."/>
            <person name="Kaine B.P."/>
            <person name="Borodovsky M."/>
            <person name="Klenk H.-P."/>
            <person name="Fraser C.M."/>
            <person name="Smith H.O."/>
            <person name="Woese C.R."/>
            <person name="Venter J.C."/>
        </authorList>
    </citation>
    <scope>NUCLEOTIDE SEQUENCE [LARGE SCALE GENOMIC DNA]</scope>
    <source>
        <strain>ATCC 43067 / DSM 2661 / JAL-1 / JCM 10045 / NBRC 100440</strain>
    </source>
</reference>
<keyword id="KW-1003">Cell membrane</keyword>
<keyword id="KW-0472">Membrane</keyword>
<keyword id="KW-1185">Reference proteome</keyword>
<keyword id="KW-0812">Transmembrane</keyword>
<keyword id="KW-1133">Transmembrane helix</keyword>
<organism>
    <name type="scientific">Methanocaldococcus jannaschii (strain ATCC 43067 / DSM 2661 / JAL-1 / JCM 10045 / NBRC 100440)</name>
    <name type="common">Methanococcus jannaschii</name>
    <dbReference type="NCBI Taxonomy" id="243232"/>
    <lineage>
        <taxon>Archaea</taxon>
        <taxon>Methanobacteriati</taxon>
        <taxon>Methanobacteriota</taxon>
        <taxon>Methanomada group</taxon>
        <taxon>Methanococci</taxon>
        <taxon>Methanococcales</taxon>
        <taxon>Methanocaldococcaceae</taxon>
        <taxon>Methanocaldococcus</taxon>
    </lineage>
</organism>
<name>Y587_METJA</name>
<proteinExistence type="predicted"/>
<sequence length="153" mass="17733">MVNEYKAHSSFILKVVITLIGYWIASILAIIIYSMFFKIETNTFLLCLLLPTPIIWFNILIGMGLTYRCMENLTIYDKHKLWCVFVRDLTLTILATILATLTTMELYQIEHPLKPIEFVFIVGLVLIVGFTIITTLIIKYLKIIKNLKKISKN</sequence>
<comment type="subcellular location">
    <subcellularLocation>
        <location evidence="2">Cell membrane</location>
        <topology evidence="2">Multi-pass membrane protein</topology>
    </subcellularLocation>
</comment>
<comment type="similarity">
    <text evidence="2">To M.jannaschii MJ0129 and MJ0554.</text>
</comment>
<protein>
    <recommendedName>
        <fullName>Uncharacterized protein MJ0587</fullName>
    </recommendedName>
</protein>
<dbReference type="EMBL" id="L77117">
    <property type="protein sequence ID" value="AAB98584.1"/>
    <property type="molecule type" value="Genomic_DNA"/>
</dbReference>
<dbReference type="PIR" id="C64373">
    <property type="entry name" value="C64373"/>
</dbReference>
<dbReference type="RefSeq" id="WP_010870091.1">
    <property type="nucleotide sequence ID" value="NC_000909.1"/>
</dbReference>
<dbReference type="SMR" id="Q58007"/>
<dbReference type="PaxDb" id="243232-MJ_0587"/>
<dbReference type="DNASU" id="1451452"/>
<dbReference type="EnsemblBacteria" id="AAB98584">
    <property type="protein sequence ID" value="AAB98584"/>
    <property type="gene ID" value="MJ_0587"/>
</dbReference>
<dbReference type="GeneID" id="1451452"/>
<dbReference type="KEGG" id="mja:MJ_0587"/>
<dbReference type="HOGENOM" id="CLU_1718222_0_0_2"/>
<dbReference type="InParanoid" id="Q58007"/>
<dbReference type="PhylomeDB" id="Q58007"/>
<dbReference type="Proteomes" id="UP000000805">
    <property type="component" value="Chromosome"/>
</dbReference>
<dbReference type="GO" id="GO:0005886">
    <property type="term" value="C:plasma membrane"/>
    <property type="evidence" value="ECO:0007669"/>
    <property type="project" value="UniProtKB-SubCell"/>
</dbReference>
<dbReference type="InterPro" id="IPR035582">
    <property type="entry name" value="DUF5418"/>
</dbReference>
<dbReference type="Pfam" id="PF17439">
    <property type="entry name" value="DUF5418"/>
    <property type="match status" value="1"/>
</dbReference>
<feature type="chain" id="PRO_0000106946" description="Uncharacterized protein MJ0587">
    <location>
        <begin position="1"/>
        <end position="153"/>
    </location>
</feature>
<feature type="transmembrane region" description="Helical" evidence="1">
    <location>
        <begin position="17"/>
        <end position="37"/>
    </location>
</feature>
<feature type="transmembrane region" description="Helical" evidence="1">
    <location>
        <begin position="44"/>
        <end position="64"/>
    </location>
</feature>
<feature type="transmembrane region" description="Helical" evidence="1">
    <location>
        <begin position="118"/>
        <end position="138"/>
    </location>
</feature>